<dbReference type="EC" id="3.5.1.47" evidence="1"/>
<dbReference type="EMBL" id="CP001015">
    <property type="protein sequence ID" value="ACF55104.1"/>
    <property type="molecule type" value="Genomic_DNA"/>
</dbReference>
<dbReference type="SMR" id="B5E3A3"/>
<dbReference type="KEGG" id="spx:SPG_2033"/>
<dbReference type="HOGENOM" id="CLU_023257_0_1_9"/>
<dbReference type="UniPathway" id="UPA00034">
    <property type="reaction ID" value="UER00024"/>
</dbReference>
<dbReference type="GO" id="GO:0050118">
    <property type="term" value="F:N-acetyldiaminopimelate deacetylase activity"/>
    <property type="evidence" value="ECO:0007669"/>
    <property type="project" value="UniProtKB-UniRule"/>
</dbReference>
<dbReference type="GO" id="GO:0019877">
    <property type="term" value="P:diaminopimelate biosynthetic process"/>
    <property type="evidence" value="ECO:0007669"/>
    <property type="project" value="UniProtKB-UniRule"/>
</dbReference>
<dbReference type="GO" id="GO:0009089">
    <property type="term" value="P:lysine biosynthetic process via diaminopimelate"/>
    <property type="evidence" value="ECO:0007669"/>
    <property type="project" value="UniProtKB-UniRule"/>
</dbReference>
<dbReference type="CDD" id="cd05670">
    <property type="entry name" value="M20_Acy1_YkuR-like"/>
    <property type="match status" value="1"/>
</dbReference>
<dbReference type="FunFam" id="3.30.70.360:FF:000001">
    <property type="entry name" value="N-acetyldiaminopimelate deacetylase"/>
    <property type="match status" value="1"/>
</dbReference>
<dbReference type="Gene3D" id="3.30.70.360">
    <property type="match status" value="1"/>
</dbReference>
<dbReference type="Gene3D" id="3.40.630.10">
    <property type="entry name" value="Zn peptidases"/>
    <property type="match status" value="1"/>
</dbReference>
<dbReference type="HAMAP" id="MF_01692">
    <property type="entry name" value="DapEL"/>
    <property type="match status" value="1"/>
</dbReference>
<dbReference type="InterPro" id="IPR023905">
    <property type="entry name" value="AcetylDAP_deacetylase"/>
</dbReference>
<dbReference type="InterPro" id="IPR017439">
    <property type="entry name" value="Amidohydrolase"/>
</dbReference>
<dbReference type="InterPro" id="IPR036264">
    <property type="entry name" value="Bact_exopeptidase_dim_dom"/>
</dbReference>
<dbReference type="InterPro" id="IPR002933">
    <property type="entry name" value="Peptidase_M20"/>
</dbReference>
<dbReference type="InterPro" id="IPR011650">
    <property type="entry name" value="Peptidase_M20_dimer"/>
</dbReference>
<dbReference type="NCBIfam" id="TIGR01891">
    <property type="entry name" value="amidohydrolases"/>
    <property type="match status" value="1"/>
</dbReference>
<dbReference type="PANTHER" id="PTHR11014:SF98">
    <property type="entry name" value="N-ACETYLDIAMINOPIMELATE DEACETYLASE"/>
    <property type="match status" value="1"/>
</dbReference>
<dbReference type="PANTHER" id="PTHR11014">
    <property type="entry name" value="PEPTIDASE M20 FAMILY MEMBER"/>
    <property type="match status" value="1"/>
</dbReference>
<dbReference type="Pfam" id="PF07687">
    <property type="entry name" value="M20_dimer"/>
    <property type="match status" value="1"/>
</dbReference>
<dbReference type="Pfam" id="PF01546">
    <property type="entry name" value="Peptidase_M20"/>
    <property type="match status" value="1"/>
</dbReference>
<dbReference type="PIRSF" id="PIRSF005962">
    <property type="entry name" value="Pept_M20D_amidohydro"/>
    <property type="match status" value="1"/>
</dbReference>
<dbReference type="SUPFAM" id="SSF55031">
    <property type="entry name" value="Bacterial exopeptidase dimerisation domain"/>
    <property type="match status" value="1"/>
</dbReference>
<dbReference type="SUPFAM" id="SSF53187">
    <property type="entry name" value="Zn-dependent exopeptidases"/>
    <property type="match status" value="1"/>
</dbReference>
<protein>
    <recommendedName>
        <fullName evidence="1">N-acetyldiaminopimelate deacetylase</fullName>
        <ecNumber evidence="1">3.5.1.47</ecNumber>
    </recommendedName>
</protein>
<keyword id="KW-0028">Amino-acid biosynthesis</keyword>
<keyword id="KW-0220">Diaminopimelate biosynthesis</keyword>
<keyword id="KW-0378">Hydrolase</keyword>
<keyword id="KW-0457">Lysine biosynthesis</keyword>
<reference key="1">
    <citation type="journal article" date="2001" name="Microb. Drug Resist.">
        <title>Annotated draft genomic sequence from a Streptococcus pneumoniae type 19F clinical isolate.</title>
        <authorList>
            <person name="Dopazo J."/>
            <person name="Mendoza A."/>
            <person name="Herrero J."/>
            <person name="Caldara F."/>
            <person name="Humbert Y."/>
            <person name="Friedli L."/>
            <person name="Guerrier M."/>
            <person name="Grand-Schenk E."/>
            <person name="Gandin C."/>
            <person name="de Francesco M."/>
            <person name="Polissi A."/>
            <person name="Buell G."/>
            <person name="Feger G."/>
            <person name="Garcia E."/>
            <person name="Peitsch M."/>
            <person name="Garcia-Bustos J.F."/>
        </authorList>
    </citation>
    <scope>NUCLEOTIDE SEQUENCE [LARGE SCALE GENOMIC DNA]</scope>
    <source>
        <strain>G54</strain>
    </source>
</reference>
<reference key="2">
    <citation type="submission" date="2008-03" db="EMBL/GenBank/DDBJ databases">
        <title>Pneumococcal beta glucoside metabolism investigated by whole genome comparison.</title>
        <authorList>
            <person name="Mulas L."/>
            <person name="Trappetti C."/>
            <person name="Hakenbeck R."/>
            <person name="Iannelli F."/>
            <person name="Pozzi G."/>
            <person name="Davidsen T.M."/>
            <person name="Tettelin H."/>
            <person name="Oggioni M."/>
        </authorList>
    </citation>
    <scope>NUCLEOTIDE SEQUENCE [LARGE SCALE GENOMIC DNA]</scope>
    <source>
        <strain>G54</strain>
    </source>
</reference>
<accession>B5E3A3</accession>
<proteinExistence type="inferred from homology"/>
<evidence type="ECO:0000255" key="1">
    <source>
        <dbReference type="HAMAP-Rule" id="MF_01692"/>
    </source>
</evidence>
<organism>
    <name type="scientific">Streptococcus pneumoniae serotype 19F (strain G54)</name>
    <dbReference type="NCBI Taxonomy" id="512566"/>
    <lineage>
        <taxon>Bacteria</taxon>
        <taxon>Bacillati</taxon>
        <taxon>Bacillota</taxon>
        <taxon>Bacilli</taxon>
        <taxon>Lactobacillales</taxon>
        <taxon>Streptococcaceae</taxon>
        <taxon>Streptococcus</taxon>
    </lineage>
</organism>
<gene>
    <name type="ordered locus">SPG_2033</name>
</gene>
<sequence>MLDLIQTRRDLHQIPEIGLEEFKTQAYLLDVIEKLTTGKDFVQIRTWRTGILVYLQGSQPERTIGWRTDIDGLPIVEQTGLLFASQHQGRMHACGHDFHMTIALGCLERALEEQPKNNLLFLFQPAEENEAGGMLMYEDGAFGDWLPDQFYGLHVRPDLKVGQIATNTHTLFAGTCEVKIRFKGKGGHAAFPHEANDALVVASYFVTQVQSVVSRNVNPIEGAVVTFGVFQAGTTNNVITDTAFLHGTIRALTQDMSLLVQKRVKTVAEGVAAAFDMEVEVELKQGGYLPVENNPALARELMDFFDEKDGIELIDIEPAMTGEDFGYLLSKVDGVMFWLGIDSPYALHHPQMSPKEEVLAIGVAAVSSFLKKKAAE</sequence>
<feature type="chain" id="PRO_0000376787" description="N-acetyldiaminopimelate deacetylase">
    <location>
        <begin position="1"/>
        <end position="376"/>
    </location>
</feature>
<feature type="active site" evidence="1">
    <location>
        <position position="69"/>
    </location>
</feature>
<feature type="active site" description="Proton acceptor" evidence="1">
    <location>
        <position position="128"/>
    </location>
</feature>
<name>DAPEL_STRP4</name>
<comment type="function">
    <text evidence="1">Catalyzes the conversion of N-acetyl-diaminopimelate to diaminopimelate and acetate.</text>
</comment>
<comment type="catalytic activity">
    <reaction evidence="1">
        <text>N-acetyl-(2S,6S)-2,6-diaminopimelate + H2O = (2S,6S)-2,6-diaminopimelate + acetate</text>
        <dbReference type="Rhea" id="RHEA:20405"/>
        <dbReference type="ChEBI" id="CHEBI:15377"/>
        <dbReference type="ChEBI" id="CHEBI:30089"/>
        <dbReference type="ChEBI" id="CHEBI:57609"/>
        <dbReference type="ChEBI" id="CHEBI:58767"/>
        <dbReference type="EC" id="3.5.1.47"/>
    </reaction>
</comment>
<comment type="pathway">
    <text evidence="1">Amino-acid biosynthesis; L-lysine biosynthesis via DAP pathway; LL-2,6-diaminopimelate from (S)-tetrahydrodipicolinate (acetylase route): step 3/3.</text>
</comment>
<comment type="similarity">
    <text evidence="1">Belongs to the peptidase M20A family. N-acetyldiaminopimelate deacetylase subfamily.</text>
</comment>